<protein>
    <recommendedName>
        <fullName>Cytolethal distending toxin subunit A</fullName>
        <shortName>CDT A</shortName>
    </recommendedName>
</protein>
<reference key="1">
    <citation type="journal article" date="1994" name="Infect. Immun.">
        <title>Cloning, sequencing, and expression of the Escherichia coli cytolethal distending toxin genes.</title>
        <authorList>
            <person name="Pickett C.L."/>
            <person name="Cottle D.L."/>
            <person name="Pesci E.C."/>
            <person name="Bikah G."/>
        </authorList>
    </citation>
    <scope>NUCLEOTIDE SEQUENCE [GENOMIC DNA]</scope>
    <source>
        <strain>O128:H- / 9142-88 / EPEC</strain>
    </source>
</reference>
<gene>
    <name type="primary">cdtA</name>
</gene>
<dbReference type="EMBL" id="U04208">
    <property type="protein sequence ID" value="AAA18785.1"/>
    <property type="molecule type" value="Unassigned_DNA"/>
</dbReference>
<dbReference type="PIR" id="I54627">
    <property type="entry name" value="I54627"/>
</dbReference>
<dbReference type="SMR" id="Q46668"/>
<dbReference type="TCDB" id="1.C.98.1.1">
    <property type="family name" value="the cytolethal distending toxin (cdt) family"/>
</dbReference>
<dbReference type="GO" id="GO:0009279">
    <property type="term" value="C:cell outer membrane"/>
    <property type="evidence" value="ECO:0007669"/>
    <property type="project" value="UniProtKB-SubCell"/>
</dbReference>
<dbReference type="GO" id="GO:0030246">
    <property type="term" value="F:carbohydrate binding"/>
    <property type="evidence" value="ECO:0007669"/>
    <property type="project" value="UniProtKB-KW"/>
</dbReference>
<dbReference type="GO" id="GO:0090729">
    <property type="term" value="F:toxin activity"/>
    <property type="evidence" value="ECO:0007669"/>
    <property type="project" value="UniProtKB-KW"/>
</dbReference>
<dbReference type="CDD" id="cd23414">
    <property type="entry name" value="beta-trefoil_Ricin_CdtA"/>
    <property type="match status" value="1"/>
</dbReference>
<dbReference type="Gene3D" id="2.80.10.50">
    <property type="match status" value="1"/>
</dbReference>
<dbReference type="InterPro" id="IPR015957">
    <property type="entry name" value="CDtoxinA"/>
</dbReference>
<dbReference type="InterPro" id="IPR003558">
    <property type="entry name" value="CDtoxinA/C"/>
</dbReference>
<dbReference type="InterPro" id="IPR035992">
    <property type="entry name" value="Ricin_B-like_lectins"/>
</dbReference>
<dbReference type="Pfam" id="PF03498">
    <property type="entry name" value="CDtoxinA"/>
    <property type="match status" value="1"/>
</dbReference>
<dbReference type="PIRSF" id="PIRSF036516">
    <property type="entry name" value="CDT_A"/>
    <property type="match status" value="1"/>
</dbReference>
<dbReference type="PRINTS" id="PR01387">
    <property type="entry name" value="CDTOXINA"/>
</dbReference>
<dbReference type="SUPFAM" id="SSF50370">
    <property type="entry name" value="Ricin B-like lectins"/>
    <property type="match status" value="1"/>
</dbReference>
<dbReference type="PROSITE" id="PS50231">
    <property type="entry name" value="RICIN_B_LECTIN"/>
    <property type="match status" value="1"/>
</dbReference>
<organism>
    <name type="scientific">Escherichia coli</name>
    <dbReference type="NCBI Taxonomy" id="562"/>
    <lineage>
        <taxon>Bacteria</taxon>
        <taxon>Pseudomonadati</taxon>
        <taxon>Pseudomonadota</taxon>
        <taxon>Gammaproteobacteria</taxon>
        <taxon>Enterobacterales</taxon>
        <taxon>Enterobacteriaceae</taxon>
        <taxon>Escherichia</taxon>
    </lineage>
</organism>
<comment type="function">
    <text>CDTs are cytotoxins which induce host cell distension, growth arrest in G2/M phase, nucleus swelling, and chromatin fragmentation in HeLa cells. CdtA, along with CdtC, probably forms a heterodimeric subunit required for the delivery of CdtB.</text>
</comment>
<comment type="subunit">
    <text>Heterotrimer of 3 subunits, CdtA, CdtB and CdtC.</text>
</comment>
<comment type="subcellular location">
    <subcellularLocation>
        <location evidence="5">Cell outer membrane</location>
        <topology evidence="5">Lipid-anchor</topology>
    </subcellularLocation>
</comment>
<comment type="miscellaneous">
    <text>The operon of the strain O128:H- / 9142-88 / EPEC is referred to as cdt type II (CDT-II).</text>
</comment>
<feature type="signal peptide" evidence="2">
    <location>
        <begin position="1"/>
        <end position="21"/>
    </location>
</feature>
<feature type="chain" id="PRO_0000013370" description="Cytolethal distending toxin subunit A">
    <location>
        <begin position="22"/>
        <end position="258"/>
    </location>
</feature>
<feature type="domain" description="Ricin B-type lectin" evidence="3">
    <location>
        <begin position="125"/>
        <end position="223"/>
    </location>
</feature>
<feature type="region of interest" description="Disordered" evidence="4">
    <location>
        <begin position="40"/>
        <end position="71"/>
    </location>
</feature>
<feature type="region of interest" description="Mediates binding to target cells" evidence="1">
    <location>
        <begin position="93"/>
        <end position="104"/>
    </location>
</feature>
<feature type="region of interest" description="Disordered" evidence="4">
    <location>
        <begin position="236"/>
        <end position="258"/>
    </location>
</feature>
<feature type="compositionally biased region" description="Pro residues" evidence="4">
    <location>
        <begin position="46"/>
        <end position="62"/>
    </location>
</feature>
<feature type="compositionally biased region" description="Basic and acidic residues" evidence="4">
    <location>
        <begin position="249"/>
        <end position="258"/>
    </location>
</feature>
<feature type="lipid moiety-binding region" description="N-palmitoyl cysteine" evidence="2">
    <location>
        <position position="22"/>
    </location>
</feature>
<feature type="lipid moiety-binding region" description="S-diacylglycerol cysteine" evidence="2">
    <location>
        <position position="22"/>
    </location>
</feature>
<evidence type="ECO:0000250" key="1"/>
<evidence type="ECO:0000255" key="2"/>
<evidence type="ECO:0000255" key="3">
    <source>
        <dbReference type="PROSITE-ProRule" id="PRU00174"/>
    </source>
</evidence>
<evidence type="ECO:0000256" key="4">
    <source>
        <dbReference type="SAM" id="MobiDB-lite"/>
    </source>
</evidence>
<evidence type="ECO:0000305" key="5"/>
<name>CDTA_ECOLX</name>
<keyword id="KW-0998">Cell outer membrane</keyword>
<keyword id="KW-0430">Lectin</keyword>
<keyword id="KW-0449">Lipoprotein</keyword>
<keyword id="KW-0472">Membrane</keyword>
<keyword id="KW-0564">Palmitate</keyword>
<keyword id="KW-0732">Signal</keyword>
<keyword id="KW-0800">Toxin</keyword>
<keyword id="KW-0843">Virulence</keyword>
<proteinExistence type="inferred from homology"/>
<sequence length="258" mass="27712">MANKRTPIFIAGILIPILLNGCSSGKNKAYLDPKVFPPQVEGGPTVPSPDEPGLPLPGPGPALPTNGAIPIPEPGTAPAVSLMNMDGSVLTMWSRGAGSSLWAYYIGDSNSFGELRNWQIMPGTRPNTIQFRNVDVGTCMTSFPGFKGGVQLSTAPCKFGPERFDFQPMATRNGNYQLKSLSTGLCIRANFLGRTPSSPYATTLTMERCPSSGEKNFEFMWSISEPLRPALATIAKPEIRPFPPQPIEPDEHSTGGEQ</sequence>
<accession>Q46668</accession>